<name>DSBD_HAEIN</name>
<proteinExistence type="inferred from homology"/>
<dbReference type="EC" id="1.8.1.8"/>
<dbReference type="EMBL" id="L42023">
    <property type="protein sequence ID" value="AAC22543.1"/>
    <property type="molecule type" value="Genomic_DNA"/>
</dbReference>
<dbReference type="PIR" id="A64100">
    <property type="entry name" value="A64100"/>
</dbReference>
<dbReference type="RefSeq" id="NP_439046.1">
    <property type="nucleotide sequence ID" value="NC_000907.1"/>
</dbReference>
<dbReference type="SMR" id="P44919"/>
<dbReference type="STRING" id="71421.HI_0885"/>
<dbReference type="EnsemblBacteria" id="AAC22543">
    <property type="protein sequence ID" value="AAC22543"/>
    <property type="gene ID" value="HI_0885"/>
</dbReference>
<dbReference type="KEGG" id="hin:HI_0885"/>
<dbReference type="PATRIC" id="fig|71421.8.peg.927"/>
<dbReference type="eggNOG" id="COG4232">
    <property type="taxonomic scope" value="Bacteria"/>
</dbReference>
<dbReference type="HOGENOM" id="CLU_014657_3_0_6"/>
<dbReference type="OrthoDB" id="9811036at2"/>
<dbReference type="PhylomeDB" id="P44919"/>
<dbReference type="BioCyc" id="HINF71421:G1GJ1-925-MONOMER"/>
<dbReference type="Proteomes" id="UP000000579">
    <property type="component" value="Chromosome"/>
</dbReference>
<dbReference type="GO" id="GO:0005886">
    <property type="term" value="C:plasma membrane"/>
    <property type="evidence" value="ECO:0007669"/>
    <property type="project" value="UniProtKB-SubCell"/>
</dbReference>
<dbReference type="GO" id="GO:0009055">
    <property type="term" value="F:electron transfer activity"/>
    <property type="evidence" value="ECO:0007669"/>
    <property type="project" value="UniProtKB-UniRule"/>
</dbReference>
<dbReference type="GO" id="GO:0047134">
    <property type="term" value="F:protein-disulfide reductase [NAD(P)H] activity"/>
    <property type="evidence" value="ECO:0007669"/>
    <property type="project" value="UniProtKB-UniRule"/>
</dbReference>
<dbReference type="GO" id="GO:0015035">
    <property type="term" value="F:protein-disulfide reductase activity"/>
    <property type="evidence" value="ECO:0000318"/>
    <property type="project" value="GO_Central"/>
</dbReference>
<dbReference type="GO" id="GO:0045454">
    <property type="term" value="P:cell redox homeostasis"/>
    <property type="evidence" value="ECO:0000318"/>
    <property type="project" value="GO_Central"/>
</dbReference>
<dbReference type="GO" id="GO:0017004">
    <property type="term" value="P:cytochrome complex assembly"/>
    <property type="evidence" value="ECO:0007669"/>
    <property type="project" value="UniProtKB-UniRule"/>
</dbReference>
<dbReference type="CDD" id="cd02953">
    <property type="entry name" value="DsbDgamma"/>
    <property type="match status" value="1"/>
</dbReference>
<dbReference type="FunFam" id="2.60.40.1250:FF:000002">
    <property type="entry name" value="Thiol:disulfide interchange protein DsbD"/>
    <property type="match status" value="1"/>
</dbReference>
<dbReference type="FunFam" id="3.40.30.10:FF:000116">
    <property type="entry name" value="Thiol:disulfide interchange protein DsbD"/>
    <property type="match status" value="1"/>
</dbReference>
<dbReference type="Gene3D" id="3.40.30.10">
    <property type="entry name" value="Glutaredoxin"/>
    <property type="match status" value="1"/>
</dbReference>
<dbReference type="Gene3D" id="2.60.40.1250">
    <property type="entry name" value="Thiol:disulfide interchange protein DsbD, N-terminal domain"/>
    <property type="match status" value="1"/>
</dbReference>
<dbReference type="HAMAP" id="MF_00399">
    <property type="entry name" value="DbsD"/>
    <property type="match status" value="1"/>
</dbReference>
<dbReference type="InterPro" id="IPR003834">
    <property type="entry name" value="Cyt_c_assmbl_TM_dom"/>
</dbReference>
<dbReference type="InterPro" id="IPR035671">
    <property type="entry name" value="DsbD_gamma"/>
</dbReference>
<dbReference type="InterPro" id="IPR028250">
    <property type="entry name" value="DsbDN"/>
</dbReference>
<dbReference type="InterPro" id="IPR036929">
    <property type="entry name" value="DsbDN_sf"/>
</dbReference>
<dbReference type="InterPro" id="IPR022910">
    <property type="entry name" value="Thiol_diS_interchange_DbsD"/>
</dbReference>
<dbReference type="InterPro" id="IPR012336">
    <property type="entry name" value="Thioredoxin-like_fold"/>
</dbReference>
<dbReference type="InterPro" id="IPR036249">
    <property type="entry name" value="Thioredoxin-like_sf"/>
</dbReference>
<dbReference type="InterPro" id="IPR017937">
    <property type="entry name" value="Thioredoxin_CS"/>
</dbReference>
<dbReference type="InterPro" id="IPR013766">
    <property type="entry name" value="Thioredoxin_domain"/>
</dbReference>
<dbReference type="NCBIfam" id="NF001419">
    <property type="entry name" value="PRK00293.1"/>
    <property type="match status" value="1"/>
</dbReference>
<dbReference type="PANTHER" id="PTHR32234">
    <property type="entry name" value="THIOL:DISULFIDE INTERCHANGE PROTEIN DSBD"/>
    <property type="match status" value="1"/>
</dbReference>
<dbReference type="PANTHER" id="PTHR32234:SF0">
    <property type="entry name" value="THIOL:DISULFIDE INTERCHANGE PROTEIN DSBD"/>
    <property type="match status" value="1"/>
</dbReference>
<dbReference type="Pfam" id="PF11412">
    <property type="entry name" value="DsbD_N"/>
    <property type="match status" value="1"/>
</dbReference>
<dbReference type="Pfam" id="PF02683">
    <property type="entry name" value="DsbD_TM"/>
    <property type="match status" value="1"/>
</dbReference>
<dbReference type="Pfam" id="PF13098">
    <property type="entry name" value="Thioredoxin_2"/>
    <property type="match status" value="1"/>
</dbReference>
<dbReference type="SUPFAM" id="SSF74863">
    <property type="entry name" value="Thiol:disulfide interchange protein DsbD, N-terminal domain (DsbD-alpha)"/>
    <property type="match status" value="1"/>
</dbReference>
<dbReference type="SUPFAM" id="SSF52833">
    <property type="entry name" value="Thioredoxin-like"/>
    <property type="match status" value="1"/>
</dbReference>
<dbReference type="PROSITE" id="PS00194">
    <property type="entry name" value="THIOREDOXIN_1"/>
    <property type="match status" value="1"/>
</dbReference>
<dbReference type="PROSITE" id="PS51352">
    <property type="entry name" value="THIOREDOXIN_2"/>
    <property type="match status" value="1"/>
</dbReference>
<comment type="function">
    <text evidence="1">Required to facilitate the formation of correct disulfide bonds in some periplasmic proteins and for the assembly of the periplasmic c-type cytochromes. Acts by transferring electrons from cytoplasmic thioredoxin to the periplasm. This transfer involves a cascade of disulfide bond formation and reduction steps (By similarity).</text>
</comment>
<comment type="catalytic activity">
    <reaction>
        <text>[protein]-dithiol + NAD(+) = [protein]-disulfide + NADH + H(+)</text>
        <dbReference type="Rhea" id="RHEA:18749"/>
        <dbReference type="Rhea" id="RHEA-COMP:10593"/>
        <dbReference type="Rhea" id="RHEA-COMP:10594"/>
        <dbReference type="ChEBI" id="CHEBI:15378"/>
        <dbReference type="ChEBI" id="CHEBI:29950"/>
        <dbReference type="ChEBI" id="CHEBI:50058"/>
        <dbReference type="ChEBI" id="CHEBI:57540"/>
        <dbReference type="ChEBI" id="CHEBI:57945"/>
        <dbReference type="EC" id="1.8.1.8"/>
    </reaction>
</comment>
<comment type="catalytic activity">
    <reaction>
        <text>[protein]-dithiol + NADP(+) = [protein]-disulfide + NADPH + H(+)</text>
        <dbReference type="Rhea" id="RHEA:18753"/>
        <dbReference type="Rhea" id="RHEA-COMP:10593"/>
        <dbReference type="Rhea" id="RHEA-COMP:10594"/>
        <dbReference type="ChEBI" id="CHEBI:15378"/>
        <dbReference type="ChEBI" id="CHEBI:29950"/>
        <dbReference type="ChEBI" id="CHEBI:50058"/>
        <dbReference type="ChEBI" id="CHEBI:57783"/>
        <dbReference type="ChEBI" id="CHEBI:58349"/>
        <dbReference type="EC" id="1.8.1.8"/>
    </reaction>
</comment>
<comment type="subcellular location">
    <subcellularLocation>
        <location evidence="1">Cell inner membrane</location>
        <topology evidence="1">Multi-pass membrane protein</topology>
    </subcellularLocation>
</comment>
<comment type="similarity">
    <text evidence="3">Belongs to the thioredoxin family. DsbD subfamily.</text>
</comment>
<evidence type="ECO:0000250" key="1"/>
<evidence type="ECO:0000255" key="2"/>
<evidence type="ECO:0000305" key="3"/>
<accession>P44919</accession>
<sequence length="579" mass="64406">MKKLFLFFTLIFTAFAANSGLFDKKQTFLKVDDAFAFSATLSTDKSQLQAHWDIADGYYLYQDKISAELVGKSNPLSLHTQQAAELHQDPYFGEVKVFTHSIDGIFRGAFNNADDKVEITYQGCTEGFCYPPETKVLRIGDLVVSQKQIVEKTVEKNTALLSEQDRLADGLFHSKWAIFGFFVLGLGLAFTPCVLPMLPLLSAIVIGQQQRPNMMRAFSLAFLYVQGMALTYTLLGLAVAAIGLPFQIALQHPYVMIGLSILFVALALSMFGLFTIQLPNSLQNKLNTWSQKQTSGAFGGAFAMGMIAGLVASPCTSAPLSGALLYVAQSGDLFTGAVTLYLLALGMGVPLMLITLFGNKILPKSGEWMNTVKQTFGFVMLALPVFLLSRILPEVWEPRLWAGLATVFFIWFALQMSKNGFGYAIKIISFALAMVTVQPLQNWIWQTQTTTQSAVENMPVSQVKFKQIKNTEELDRTLAENPHSIAMLDLYADWCVACKEFEKLTFSDPQVQQQFQNILLLQVSMTKNSPENKALMERFNVMGLPTILFFDQQNNEIKGSRVTGFMDADAFSNWIEKLL</sequence>
<organism>
    <name type="scientific">Haemophilus influenzae (strain ATCC 51907 / DSM 11121 / KW20 / Rd)</name>
    <dbReference type="NCBI Taxonomy" id="71421"/>
    <lineage>
        <taxon>Bacteria</taxon>
        <taxon>Pseudomonadati</taxon>
        <taxon>Pseudomonadota</taxon>
        <taxon>Gammaproteobacteria</taxon>
        <taxon>Pasteurellales</taxon>
        <taxon>Pasteurellaceae</taxon>
        <taxon>Haemophilus</taxon>
    </lineage>
</organism>
<protein>
    <recommendedName>
        <fullName>Thiol:disulfide interchange protein DsbD</fullName>
        <ecNumber>1.8.1.8</ecNumber>
    </recommendedName>
    <alternativeName>
        <fullName>C-type cytochrome biogenesis protein CycZ</fullName>
    </alternativeName>
    <alternativeName>
        <fullName>Protein-disulfide reductase</fullName>
        <shortName>Disulfide reductase</shortName>
    </alternativeName>
</protein>
<reference key="1">
    <citation type="journal article" date="1995" name="Science">
        <title>Whole-genome random sequencing and assembly of Haemophilus influenzae Rd.</title>
        <authorList>
            <person name="Fleischmann R.D."/>
            <person name="Adams M.D."/>
            <person name="White O."/>
            <person name="Clayton R.A."/>
            <person name="Kirkness E.F."/>
            <person name="Kerlavage A.R."/>
            <person name="Bult C.J."/>
            <person name="Tomb J.-F."/>
            <person name="Dougherty B.A."/>
            <person name="Merrick J.M."/>
            <person name="McKenney K."/>
            <person name="Sutton G.G."/>
            <person name="FitzHugh W."/>
            <person name="Fields C.A."/>
            <person name="Gocayne J.D."/>
            <person name="Scott J.D."/>
            <person name="Shirley R."/>
            <person name="Liu L.-I."/>
            <person name="Glodek A."/>
            <person name="Kelley J.M."/>
            <person name="Weidman J.F."/>
            <person name="Phillips C.A."/>
            <person name="Spriggs T."/>
            <person name="Hedblom E."/>
            <person name="Cotton M.D."/>
            <person name="Utterback T.R."/>
            <person name="Hanna M.C."/>
            <person name="Nguyen D.T."/>
            <person name="Saudek D.M."/>
            <person name="Brandon R.C."/>
            <person name="Fine L.D."/>
            <person name="Fritchman J.L."/>
            <person name="Fuhrmann J.L."/>
            <person name="Geoghagen N.S.M."/>
            <person name="Gnehm C.L."/>
            <person name="McDonald L.A."/>
            <person name="Small K.V."/>
            <person name="Fraser C.M."/>
            <person name="Smith H.O."/>
            <person name="Venter J.C."/>
        </authorList>
    </citation>
    <scope>NUCLEOTIDE SEQUENCE [LARGE SCALE GENOMIC DNA]</scope>
    <source>
        <strain>ATCC 51907 / DSM 11121 / KW20 / Rd</strain>
    </source>
</reference>
<keyword id="KW-0997">Cell inner membrane</keyword>
<keyword id="KW-1003">Cell membrane</keyword>
<keyword id="KW-0201">Cytochrome c-type biogenesis</keyword>
<keyword id="KW-1015">Disulfide bond</keyword>
<keyword id="KW-0249">Electron transport</keyword>
<keyword id="KW-0472">Membrane</keyword>
<keyword id="KW-0520">NAD</keyword>
<keyword id="KW-0560">Oxidoreductase</keyword>
<keyword id="KW-0676">Redox-active center</keyword>
<keyword id="KW-1185">Reference proteome</keyword>
<keyword id="KW-0732">Signal</keyword>
<keyword id="KW-0812">Transmembrane</keyword>
<keyword id="KW-1133">Transmembrane helix</keyword>
<keyword id="KW-0813">Transport</keyword>
<gene>
    <name type="primary">dsbD</name>
    <name type="synonym">cycZ</name>
    <name type="ordered locus">HI_0885</name>
</gene>
<feature type="signal peptide" evidence="2">
    <location>
        <begin position="1"/>
        <end position="16"/>
    </location>
</feature>
<feature type="chain" id="PRO_0000007376" description="Thiol:disulfide interchange protein DsbD">
    <location>
        <begin position="17"/>
        <end position="579"/>
    </location>
</feature>
<feature type="topological domain" description="Periplasmic" evidence="2">
    <location>
        <begin position="17"/>
        <end position="177"/>
    </location>
</feature>
<feature type="transmembrane region" description="Helical" evidence="2">
    <location>
        <begin position="178"/>
        <end position="198"/>
    </location>
</feature>
<feature type="topological domain" description="Cytoplasmic" evidence="2">
    <location>
        <begin position="199"/>
        <end position="229"/>
    </location>
</feature>
<feature type="transmembrane region" description="Helical" evidence="2">
    <location>
        <begin position="230"/>
        <end position="250"/>
    </location>
</feature>
<feature type="topological domain" description="Periplasmic" evidence="2">
    <location>
        <begin position="251"/>
        <end position="253"/>
    </location>
</feature>
<feature type="transmembrane region" description="Helical" evidence="2">
    <location>
        <begin position="254"/>
        <end position="274"/>
    </location>
</feature>
<feature type="topological domain" description="Cytoplasmic" evidence="2">
    <location>
        <begin position="275"/>
        <end position="295"/>
    </location>
</feature>
<feature type="transmembrane region" description="Helical" evidence="2">
    <location>
        <begin position="296"/>
        <end position="316"/>
    </location>
</feature>
<feature type="topological domain" description="Periplasmic" evidence="2">
    <location>
        <begin position="317"/>
        <end position="336"/>
    </location>
</feature>
<feature type="transmembrane region" description="Helical" evidence="2">
    <location>
        <begin position="337"/>
        <end position="357"/>
    </location>
</feature>
<feature type="topological domain" description="Cytoplasmic" evidence="2">
    <location>
        <begin position="358"/>
        <end position="367"/>
    </location>
</feature>
<feature type="transmembrane region" description="Helical" evidence="2">
    <location>
        <begin position="368"/>
        <end position="388"/>
    </location>
</feature>
<feature type="topological domain" description="Periplasmic" evidence="2">
    <location>
        <begin position="389"/>
        <end position="396"/>
    </location>
</feature>
<feature type="transmembrane region" description="Helical" evidence="2">
    <location>
        <begin position="397"/>
        <end position="417"/>
    </location>
</feature>
<feature type="topological domain" description="Cytoplasmic" evidence="2">
    <location>
        <begin position="418"/>
        <end position="419"/>
    </location>
</feature>
<feature type="transmembrane region" description="Helical" evidence="2">
    <location>
        <begin position="420"/>
        <end position="440"/>
    </location>
</feature>
<feature type="topological domain" description="Periplasmic" evidence="2">
    <location>
        <begin position="441"/>
        <end position="579"/>
    </location>
</feature>
<feature type="domain" description="Thioredoxin">
    <location>
        <begin position="449"/>
        <end position="579"/>
    </location>
</feature>
<feature type="disulfide bond" description="Redox-active" evidence="1">
    <location>
        <begin position="124"/>
        <end position="129"/>
    </location>
</feature>
<feature type="disulfide bond" description="Redox-active" evidence="1">
    <location>
        <begin position="193"/>
        <end position="315"/>
    </location>
</feature>
<feature type="disulfide bond" description="Redox-active" evidence="1">
    <location>
        <begin position="495"/>
        <end position="498"/>
    </location>
</feature>